<evidence type="ECO:0000255" key="1">
    <source>
        <dbReference type="HAMAP-Rule" id="MF_00671"/>
    </source>
</evidence>
<comment type="function">
    <text evidence="1">Part of the Tol-Pal system, which plays a role in outer membrane invagination during cell division and is important for maintaining outer membrane integrity.</text>
</comment>
<comment type="subunit">
    <text evidence="1">The Tol-Pal system is composed of five core proteins: the inner membrane proteins TolA, TolQ and TolR, the periplasmic protein TolB and the outer membrane protein Pal. They form a network linking the inner and outer membranes and the peptidoglycan layer.</text>
</comment>
<comment type="subcellular location">
    <subcellularLocation>
        <location evidence="1">Periplasm</location>
    </subcellularLocation>
</comment>
<comment type="similarity">
    <text evidence="1">Belongs to the TolB family.</text>
</comment>
<keyword id="KW-0131">Cell cycle</keyword>
<keyword id="KW-0132">Cell division</keyword>
<keyword id="KW-0574">Periplasm</keyword>
<keyword id="KW-0732">Signal</keyword>
<gene>
    <name evidence="1" type="primary">tolB</name>
    <name type="ordered locus">VV1_2170</name>
</gene>
<protein>
    <recommendedName>
        <fullName evidence="1">Tol-Pal system protein TolB</fullName>
    </recommendedName>
</protein>
<feature type="signal peptide" evidence="1">
    <location>
        <begin position="1"/>
        <end position="22"/>
    </location>
</feature>
<feature type="chain" id="PRO_0000034692" description="Tol-Pal system protein TolB" evidence="1">
    <location>
        <begin position="23"/>
        <end position="449"/>
    </location>
</feature>
<organism>
    <name type="scientific">Vibrio vulnificus (strain CMCP6)</name>
    <dbReference type="NCBI Taxonomy" id="216895"/>
    <lineage>
        <taxon>Bacteria</taxon>
        <taxon>Pseudomonadati</taxon>
        <taxon>Pseudomonadota</taxon>
        <taxon>Gammaproteobacteria</taxon>
        <taxon>Vibrionales</taxon>
        <taxon>Vibrionaceae</taxon>
        <taxon>Vibrio</taxon>
    </lineage>
</organism>
<name>TOLB_VIBVU</name>
<accession>Q8DAM3</accession>
<sequence>MKKRLLMGLLVLLSSVTNVANAALELIITDGIDSARPIAIVPFKWQGTKALPVDISSVVASDLQRSGKFSPVPTSKMPQTPYNESEINFDAWTNLGVDTLLTGSVTQNEKGEYVINYQLVDVVRGQLTSGQSRALEDGQLVLSKDHVLFNKVATITAPRMREYAHRISDLIYEQLTGERGAFLTRIAYVVVNDKDKFPYQLRVADYDGFNERLVLRSKQPLMSPAWSPDGRRLAYVSFQNGQAEIFVLNIYTGEHEKLTSFPRHNGAPRFSPDGKKLAIVLSKTGSLQIYTLDLQTRQLTQITRDRSNNTEPFWHPDGKSLIFTSDRGGKPQIYRVNLSDGSTSRLTWQGSQNLGGQITPDGRFLIMVNRSDSGFNLAKQDLETGAVQVLTKTLLDESPSIAPNGGMVIYSSIYDKKNVLSMVSIDGRFKARLPATNGRVRAPAWSPFL</sequence>
<proteinExistence type="inferred from homology"/>
<dbReference type="EMBL" id="AE016795">
    <property type="protein sequence ID" value="AAO10555.2"/>
    <property type="molecule type" value="Genomic_DNA"/>
</dbReference>
<dbReference type="RefSeq" id="WP_011080047.1">
    <property type="nucleotide sequence ID" value="NC_004459.3"/>
</dbReference>
<dbReference type="SMR" id="Q8DAM3"/>
<dbReference type="KEGG" id="vvu:VV1_2170"/>
<dbReference type="HOGENOM" id="CLU_047123_0_0_6"/>
<dbReference type="Proteomes" id="UP000002275">
    <property type="component" value="Chromosome 1"/>
</dbReference>
<dbReference type="GO" id="GO:0042597">
    <property type="term" value="C:periplasmic space"/>
    <property type="evidence" value="ECO:0007669"/>
    <property type="project" value="UniProtKB-SubCell"/>
</dbReference>
<dbReference type="GO" id="GO:0051301">
    <property type="term" value="P:cell division"/>
    <property type="evidence" value="ECO:0007669"/>
    <property type="project" value="UniProtKB-UniRule"/>
</dbReference>
<dbReference type="GO" id="GO:0017038">
    <property type="term" value="P:protein import"/>
    <property type="evidence" value="ECO:0007669"/>
    <property type="project" value="InterPro"/>
</dbReference>
<dbReference type="Gene3D" id="2.120.10.30">
    <property type="entry name" value="TolB, C-terminal domain"/>
    <property type="match status" value="1"/>
</dbReference>
<dbReference type="Gene3D" id="3.40.50.10070">
    <property type="entry name" value="TolB, N-terminal domain"/>
    <property type="match status" value="1"/>
</dbReference>
<dbReference type="HAMAP" id="MF_00671">
    <property type="entry name" value="TolB"/>
    <property type="match status" value="1"/>
</dbReference>
<dbReference type="InterPro" id="IPR011042">
    <property type="entry name" value="6-blade_b-propeller_TolB-like"/>
</dbReference>
<dbReference type="InterPro" id="IPR011659">
    <property type="entry name" value="PD40"/>
</dbReference>
<dbReference type="InterPro" id="IPR014167">
    <property type="entry name" value="Tol-Pal_TolB"/>
</dbReference>
<dbReference type="InterPro" id="IPR007195">
    <property type="entry name" value="TolB_N"/>
</dbReference>
<dbReference type="NCBIfam" id="TIGR02800">
    <property type="entry name" value="propeller_TolB"/>
    <property type="match status" value="1"/>
</dbReference>
<dbReference type="PANTHER" id="PTHR36842:SF1">
    <property type="entry name" value="PROTEIN TOLB"/>
    <property type="match status" value="1"/>
</dbReference>
<dbReference type="PANTHER" id="PTHR36842">
    <property type="entry name" value="PROTEIN TOLB HOMOLOG"/>
    <property type="match status" value="1"/>
</dbReference>
<dbReference type="Pfam" id="PF07676">
    <property type="entry name" value="PD40"/>
    <property type="match status" value="3"/>
</dbReference>
<dbReference type="Pfam" id="PF04052">
    <property type="entry name" value="TolB_N"/>
    <property type="match status" value="1"/>
</dbReference>
<dbReference type="SUPFAM" id="SSF52964">
    <property type="entry name" value="TolB, N-terminal domain"/>
    <property type="match status" value="1"/>
</dbReference>
<dbReference type="SUPFAM" id="SSF69304">
    <property type="entry name" value="Tricorn protease N-terminal domain"/>
    <property type="match status" value="1"/>
</dbReference>
<reference key="1">
    <citation type="submission" date="2002-12" db="EMBL/GenBank/DDBJ databases">
        <title>Complete genome sequence of Vibrio vulnificus CMCP6.</title>
        <authorList>
            <person name="Rhee J.H."/>
            <person name="Kim S.Y."/>
            <person name="Chung S.S."/>
            <person name="Kim J.J."/>
            <person name="Moon Y.H."/>
            <person name="Jeong H."/>
            <person name="Choy H.E."/>
        </authorList>
    </citation>
    <scope>NUCLEOTIDE SEQUENCE [LARGE SCALE GENOMIC DNA]</scope>
    <source>
        <strain>CMCP6</strain>
    </source>
</reference>